<organism>
    <name type="scientific">Pasteurella multocida (strain Pm70)</name>
    <dbReference type="NCBI Taxonomy" id="272843"/>
    <lineage>
        <taxon>Bacteria</taxon>
        <taxon>Pseudomonadati</taxon>
        <taxon>Pseudomonadota</taxon>
        <taxon>Gammaproteobacteria</taxon>
        <taxon>Pasteurellales</taxon>
        <taxon>Pasteurellaceae</taxon>
        <taxon>Pasteurella</taxon>
    </lineage>
</organism>
<protein>
    <recommendedName>
        <fullName>Probable multidrug resistance protein NorM</fullName>
    </recommendedName>
    <alternativeName>
        <fullName>Multidrug-efflux transporter</fullName>
    </alternativeName>
</protein>
<dbReference type="EMBL" id="AE004439">
    <property type="protein sequence ID" value="AAK02735.1"/>
    <property type="molecule type" value="Genomic_DNA"/>
</dbReference>
<dbReference type="RefSeq" id="WP_005726519.1">
    <property type="nucleotide sequence ID" value="NC_002663.1"/>
</dbReference>
<dbReference type="SMR" id="Q9CMZ9"/>
<dbReference type="STRING" id="272843.PM0651"/>
<dbReference type="EnsemblBacteria" id="AAK02735">
    <property type="protein sequence ID" value="AAK02735"/>
    <property type="gene ID" value="PM0651"/>
</dbReference>
<dbReference type="KEGG" id="pmu:PM0651"/>
<dbReference type="HOGENOM" id="CLU_012893_6_0_6"/>
<dbReference type="OrthoDB" id="9780160at2"/>
<dbReference type="Proteomes" id="UP000000809">
    <property type="component" value="Chromosome"/>
</dbReference>
<dbReference type="GO" id="GO:0005886">
    <property type="term" value="C:plasma membrane"/>
    <property type="evidence" value="ECO:0007669"/>
    <property type="project" value="UniProtKB-SubCell"/>
</dbReference>
<dbReference type="GO" id="GO:0015297">
    <property type="term" value="F:antiporter activity"/>
    <property type="evidence" value="ECO:0007669"/>
    <property type="project" value="UniProtKB-KW"/>
</dbReference>
<dbReference type="GO" id="GO:0042910">
    <property type="term" value="F:xenobiotic transmembrane transporter activity"/>
    <property type="evidence" value="ECO:0007669"/>
    <property type="project" value="InterPro"/>
</dbReference>
<dbReference type="GO" id="GO:0006811">
    <property type="term" value="P:monoatomic ion transport"/>
    <property type="evidence" value="ECO:0007669"/>
    <property type="project" value="UniProtKB-KW"/>
</dbReference>
<dbReference type="CDD" id="cd13131">
    <property type="entry name" value="MATE_NorM_like"/>
    <property type="match status" value="1"/>
</dbReference>
<dbReference type="InterPro" id="IPR002528">
    <property type="entry name" value="MATE_fam"/>
</dbReference>
<dbReference type="InterPro" id="IPR050222">
    <property type="entry name" value="MATE_MdtK"/>
</dbReference>
<dbReference type="InterPro" id="IPR048279">
    <property type="entry name" value="MdtK-like"/>
</dbReference>
<dbReference type="NCBIfam" id="TIGR00797">
    <property type="entry name" value="matE"/>
    <property type="match status" value="1"/>
</dbReference>
<dbReference type="PANTHER" id="PTHR43298:SF2">
    <property type="entry name" value="FMN_FAD EXPORTER YEEO-RELATED"/>
    <property type="match status" value="1"/>
</dbReference>
<dbReference type="PANTHER" id="PTHR43298">
    <property type="entry name" value="MULTIDRUG RESISTANCE PROTEIN NORM-RELATED"/>
    <property type="match status" value="1"/>
</dbReference>
<dbReference type="Pfam" id="PF01554">
    <property type="entry name" value="MatE"/>
    <property type="match status" value="2"/>
</dbReference>
<dbReference type="PIRSF" id="PIRSF006603">
    <property type="entry name" value="DinF"/>
    <property type="match status" value="1"/>
</dbReference>
<accession>Q9CMZ9</accession>
<comment type="function">
    <text evidence="1">Multidrug efflux pump.</text>
</comment>
<comment type="subcellular location">
    <subcellularLocation>
        <location evidence="1">Cell inner membrane</location>
        <topology evidence="1">Multi-pass membrane protein</topology>
    </subcellularLocation>
</comment>
<comment type="similarity">
    <text evidence="3">Belongs to the multi antimicrobial extrusion (MATE) (TC 2.A.66.1) family.</text>
</comment>
<name>NORM_PASMU</name>
<feature type="chain" id="PRO_0000164228" description="Probable multidrug resistance protein NorM">
    <location>
        <begin position="1"/>
        <end position="464"/>
    </location>
</feature>
<feature type="transmembrane region" description="Helical" evidence="2">
    <location>
        <begin position="16"/>
        <end position="36"/>
    </location>
</feature>
<feature type="transmembrane region" description="Helical" evidence="2">
    <location>
        <begin position="51"/>
        <end position="71"/>
    </location>
</feature>
<feature type="transmembrane region" description="Helical" evidence="2">
    <location>
        <begin position="97"/>
        <end position="117"/>
    </location>
</feature>
<feature type="transmembrane region" description="Helical" evidence="2">
    <location>
        <begin position="129"/>
        <end position="149"/>
    </location>
</feature>
<feature type="transmembrane region" description="Helical" evidence="2">
    <location>
        <begin position="164"/>
        <end position="184"/>
    </location>
</feature>
<feature type="transmembrane region" description="Helical" evidence="2">
    <location>
        <begin position="194"/>
        <end position="214"/>
    </location>
</feature>
<feature type="transmembrane region" description="Helical" evidence="2">
    <location>
        <begin position="248"/>
        <end position="268"/>
    </location>
</feature>
<feature type="transmembrane region" description="Helical" evidence="2">
    <location>
        <begin position="285"/>
        <end position="305"/>
    </location>
</feature>
<feature type="transmembrane region" description="Helical" evidence="2">
    <location>
        <begin position="321"/>
        <end position="341"/>
    </location>
</feature>
<feature type="transmembrane region" description="Helical" evidence="2">
    <location>
        <begin position="355"/>
        <end position="375"/>
    </location>
</feature>
<feature type="transmembrane region" description="Helical" evidence="2">
    <location>
        <begin position="391"/>
        <end position="411"/>
    </location>
</feature>
<feature type="transmembrane region" description="Helical" evidence="2">
    <location>
        <begin position="423"/>
        <end position="443"/>
    </location>
</feature>
<proteinExistence type="inferred from homology"/>
<keyword id="KW-0050">Antiport</keyword>
<keyword id="KW-0997">Cell inner membrane</keyword>
<keyword id="KW-1003">Cell membrane</keyword>
<keyword id="KW-0406">Ion transport</keyword>
<keyword id="KW-0472">Membrane</keyword>
<keyword id="KW-1185">Reference proteome</keyword>
<keyword id="KW-0812">Transmembrane</keyword>
<keyword id="KW-1133">Transmembrane helix</keyword>
<keyword id="KW-0813">Transport</keyword>
<evidence type="ECO:0000250" key="1"/>
<evidence type="ECO:0000255" key="2"/>
<evidence type="ECO:0000305" key="3"/>
<sequence length="464" mass="50667">MKFIDFSAYKVEAKKLLLIALPILLAQIAQNSMGLVDTIMSGRVSSADMAAISVGASIWFPLVLFGHGLLLALPPTISYLNGSGKRDQIAHQVRQGIWIILFSCLPLGILIYYSNLVFDYMQVEDHLKEITIGYLHAMIWGLPAYLLMINFRCLNDGIAKTKPAMVITFLGLGLNIPLNYIFIYGKLGIPAFGAVGCGIATAIVNWFMCILMIAYCKNARNQRDLKVFAKILEKPNFTTLKKLLNLGFPIAVALFCEVALFALTALLLSPLGTDIVASHQIALNTSSFLFMLPMSLGMAATILVGQRLGEGAADKAKQVSYSALIVGLLIAVITATLTVIFRVEIAEIFVKDRDVIAMAGTLLLIAALYQFSDTVQVVAGGALRGYKDTKAILYITLFCYWVVGMPMGYTLARTDLLMPALGAEGFWIGFVVSLTIAATLLMIRMRKIQAQPDAILFAKLEKLK</sequence>
<gene>
    <name type="primary">norM</name>
    <name type="ordered locus">PM0651</name>
</gene>
<reference key="1">
    <citation type="journal article" date="2001" name="Proc. Natl. Acad. Sci. U.S.A.">
        <title>Complete genomic sequence of Pasteurella multocida Pm70.</title>
        <authorList>
            <person name="May B.J."/>
            <person name="Zhang Q."/>
            <person name="Li L.L."/>
            <person name="Paustian M.L."/>
            <person name="Whittam T.S."/>
            <person name="Kapur V."/>
        </authorList>
    </citation>
    <scope>NUCLEOTIDE SEQUENCE [LARGE SCALE GENOMIC DNA]</scope>
    <source>
        <strain>Pm70</strain>
    </source>
</reference>